<protein>
    <recommendedName>
        <fullName evidence="1">Large ribosomal subunit protein uL29c</fullName>
    </recommendedName>
    <alternativeName>
        <fullName>50S ribosomal protein L29, chloroplastic</fullName>
    </alternativeName>
</protein>
<gene>
    <name type="primary">rpl29</name>
</gene>
<sequence>MTTNLDSTQLEKLTDTDINDTVLKLKKELFELRLQKATRQEIKPHLFKQKKKLIAKLLTIKSKKS</sequence>
<comment type="subcellular location">
    <subcellularLocation>
        <location>Plastid</location>
        <location>Chloroplast</location>
    </subcellularLocation>
</comment>
<comment type="similarity">
    <text evidence="1">Belongs to the universal ribosomal protein uL29 family.</text>
</comment>
<dbReference type="EMBL" id="AF041468">
    <property type="protein sequence ID" value="AAC35711.1"/>
    <property type="molecule type" value="Genomic_DNA"/>
</dbReference>
<dbReference type="RefSeq" id="NP_050777.1">
    <property type="nucleotide sequence ID" value="NC_000926.1"/>
</dbReference>
<dbReference type="SMR" id="O46902"/>
<dbReference type="GeneID" id="857085"/>
<dbReference type="HOGENOM" id="CLU_158491_0_1_1"/>
<dbReference type="OMA" id="HIFKHKR"/>
<dbReference type="GO" id="GO:0009507">
    <property type="term" value="C:chloroplast"/>
    <property type="evidence" value="ECO:0007669"/>
    <property type="project" value="UniProtKB-SubCell"/>
</dbReference>
<dbReference type="GO" id="GO:0022625">
    <property type="term" value="C:cytosolic large ribosomal subunit"/>
    <property type="evidence" value="ECO:0007669"/>
    <property type="project" value="TreeGrafter"/>
</dbReference>
<dbReference type="GO" id="GO:0003735">
    <property type="term" value="F:structural constituent of ribosome"/>
    <property type="evidence" value="ECO:0007669"/>
    <property type="project" value="InterPro"/>
</dbReference>
<dbReference type="GO" id="GO:0006412">
    <property type="term" value="P:translation"/>
    <property type="evidence" value="ECO:0007669"/>
    <property type="project" value="UniProtKB-UniRule"/>
</dbReference>
<dbReference type="CDD" id="cd00427">
    <property type="entry name" value="Ribosomal_L29_HIP"/>
    <property type="match status" value="1"/>
</dbReference>
<dbReference type="Gene3D" id="1.10.287.310">
    <property type="match status" value="1"/>
</dbReference>
<dbReference type="HAMAP" id="MF_00374">
    <property type="entry name" value="Ribosomal_uL29"/>
    <property type="match status" value="1"/>
</dbReference>
<dbReference type="InterPro" id="IPR050063">
    <property type="entry name" value="Ribosomal_protein_uL29"/>
</dbReference>
<dbReference type="InterPro" id="IPR001854">
    <property type="entry name" value="Ribosomal_uL29"/>
</dbReference>
<dbReference type="InterPro" id="IPR036049">
    <property type="entry name" value="Ribosomal_uL29_sf"/>
</dbReference>
<dbReference type="NCBIfam" id="TIGR00012">
    <property type="entry name" value="L29"/>
    <property type="match status" value="1"/>
</dbReference>
<dbReference type="PANTHER" id="PTHR10916">
    <property type="entry name" value="60S RIBOSOMAL PROTEIN L35/50S RIBOSOMAL PROTEIN L29"/>
    <property type="match status" value="1"/>
</dbReference>
<dbReference type="PANTHER" id="PTHR10916:SF0">
    <property type="entry name" value="LARGE RIBOSOMAL SUBUNIT PROTEIN UL29C"/>
    <property type="match status" value="1"/>
</dbReference>
<dbReference type="Pfam" id="PF00831">
    <property type="entry name" value="Ribosomal_L29"/>
    <property type="match status" value="1"/>
</dbReference>
<dbReference type="SUPFAM" id="SSF46561">
    <property type="entry name" value="Ribosomal protein L29 (L29p)"/>
    <property type="match status" value="1"/>
</dbReference>
<name>RK29_GUITH</name>
<accession>O46902</accession>
<organism>
    <name type="scientific">Guillardia theta</name>
    <name type="common">Cryptophyte</name>
    <name type="synonym">Cryptomonas phi</name>
    <dbReference type="NCBI Taxonomy" id="55529"/>
    <lineage>
        <taxon>Eukaryota</taxon>
        <taxon>Cryptophyceae</taxon>
        <taxon>Pyrenomonadales</taxon>
        <taxon>Geminigeraceae</taxon>
        <taxon>Guillardia</taxon>
    </lineage>
</organism>
<feature type="chain" id="PRO_0000130528" description="Large ribosomal subunit protein uL29c">
    <location>
        <begin position="1"/>
        <end position="65"/>
    </location>
</feature>
<geneLocation type="chloroplast"/>
<proteinExistence type="inferred from homology"/>
<evidence type="ECO:0000305" key="1"/>
<reference key="1">
    <citation type="journal article" date="1997" name="Biochem. Mol. Biol. Int.">
        <title>The large ribosomal protein gene cluster of a cryptomonad plastid: gene organization, sequence and evolutionary implications.</title>
        <authorList>
            <person name="Wang S.L."/>
            <person name="Liu X.-Q."/>
            <person name="Douglas S.E."/>
        </authorList>
    </citation>
    <scope>NUCLEOTIDE SEQUENCE [GENOMIC DNA]</scope>
</reference>
<reference key="2">
    <citation type="journal article" date="1999" name="J. Mol. Evol.">
        <title>The plastid genome of the cryptophyte alga, Guillardia theta: complete sequence and conserved synteny groups confirm its common ancestry with red algae.</title>
        <authorList>
            <person name="Douglas S.E."/>
            <person name="Penny S.L."/>
        </authorList>
    </citation>
    <scope>NUCLEOTIDE SEQUENCE [LARGE SCALE GENOMIC DNA]</scope>
</reference>
<keyword id="KW-0150">Chloroplast</keyword>
<keyword id="KW-0934">Plastid</keyword>
<keyword id="KW-0687">Ribonucleoprotein</keyword>
<keyword id="KW-0689">Ribosomal protein</keyword>